<comment type="similarity">
    <text evidence="1">Belongs to the UPF0235 family.</text>
</comment>
<name>Y1055_METMP</name>
<accession>Q6LYD6</accession>
<reference key="1">
    <citation type="journal article" date="2004" name="J. Bacteriol.">
        <title>Complete genome sequence of the genetically tractable hydrogenotrophic methanogen Methanococcus maripaludis.</title>
        <authorList>
            <person name="Hendrickson E.L."/>
            <person name="Kaul R."/>
            <person name="Zhou Y."/>
            <person name="Bovee D."/>
            <person name="Chapman P."/>
            <person name="Chung J."/>
            <person name="Conway de Macario E."/>
            <person name="Dodsworth J.A."/>
            <person name="Gillett W."/>
            <person name="Graham D.E."/>
            <person name="Hackett M."/>
            <person name="Haydock A.K."/>
            <person name="Kang A."/>
            <person name="Land M.L."/>
            <person name="Levy R."/>
            <person name="Lie T.J."/>
            <person name="Major T.A."/>
            <person name="Moore B.C."/>
            <person name="Porat I."/>
            <person name="Palmeiri A."/>
            <person name="Rouse G."/>
            <person name="Saenphimmachak C."/>
            <person name="Soell D."/>
            <person name="Van Dien S."/>
            <person name="Wang T."/>
            <person name="Whitman W.B."/>
            <person name="Xia Q."/>
            <person name="Zhang Y."/>
            <person name="Larimer F.W."/>
            <person name="Olson M.V."/>
            <person name="Leigh J.A."/>
        </authorList>
    </citation>
    <scope>NUCLEOTIDE SEQUENCE [LARGE SCALE GENOMIC DNA]</scope>
    <source>
        <strain>DSM 14266 / JCM 13030 / NBRC 101832 / S2 / LL</strain>
    </source>
</reference>
<gene>
    <name type="ordered locus">MMP1055</name>
</gene>
<keyword id="KW-1185">Reference proteome</keyword>
<organism>
    <name type="scientific">Methanococcus maripaludis (strain DSM 14266 / JCM 13030 / NBRC 101832 / S2 / LL)</name>
    <dbReference type="NCBI Taxonomy" id="267377"/>
    <lineage>
        <taxon>Archaea</taxon>
        <taxon>Methanobacteriati</taxon>
        <taxon>Methanobacteriota</taxon>
        <taxon>Methanomada group</taxon>
        <taxon>Methanococci</taxon>
        <taxon>Methanococcales</taxon>
        <taxon>Methanococcaceae</taxon>
        <taxon>Methanococcus</taxon>
    </lineage>
</organism>
<feature type="chain" id="PRO_1000056772" description="UPF0235 protein MMP1055">
    <location>
        <begin position="1"/>
        <end position="101"/>
    </location>
</feature>
<evidence type="ECO:0000255" key="1">
    <source>
        <dbReference type="HAMAP-Rule" id="MF_00634"/>
    </source>
</evidence>
<dbReference type="EMBL" id="BX950229">
    <property type="protein sequence ID" value="CAF30611.1"/>
    <property type="molecule type" value="Genomic_DNA"/>
</dbReference>
<dbReference type="RefSeq" id="WP_011170999.1">
    <property type="nucleotide sequence ID" value="NC_005791.1"/>
</dbReference>
<dbReference type="SMR" id="Q6LYD6"/>
<dbReference type="STRING" id="267377.MMP1055"/>
<dbReference type="EnsemblBacteria" id="CAF30611">
    <property type="protein sequence ID" value="CAF30611"/>
    <property type="gene ID" value="MMP1055"/>
</dbReference>
<dbReference type="GeneID" id="2762782"/>
<dbReference type="KEGG" id="mmp:MMP1055"/>
<dbReference type="PATRIC" id="fig|267377.15.peg.1088"/>
<dbReference type="eggNOG" id="arCOG04058">
    <property type="taxonomic scope" value="Archaea"/>
</dbReference>
<dbReference type="HOGENOM" id="CLU_130694_6_1_2"/>
<dbReference type="OrthoDB" id="53248at2157"/>
<dbReference type="Proteomes" id="UP000000590">
    <property type="component" value="Chromosome"/>
</dbReference>
<dbReference type="GO" id="GO:0005737">
    <property type="term" value="C:cytoplasm"/>
    <property type="evidence" value="ECO:0007669"/>
    <property type="project" value="TreeGrafter"/>
</dbReference>
<dbReference type="Gene3D" id="3.30.1200.10">
    <property type="entry name" value="YggU-like"/>
    <property type="match status" value="1"/>
</dbReference>
<dbReference type="HAMAP" id="MF_00634">
    <property type="entry name" value="UPF0235"/>
    <property type="match status" value="1"/>
</dbReference>
<dbReference type="InterPro" id="IPR003746">
    <property type="entry name" value="DUF167"/>
</dbReference>
<dbReference type="InterPro" id="IPR036591">
    <property type="entry name" value="YggU-like_sf"/>
</dbReference>
<dbReference type="NCBIfam" id="TIGR00251">
    <property type="entry name" value="DUF167 family protein"/>
    <property type="match status" value="1"/>
</dbReference>
<dbReference type="PANTHER" id="PTHR13420">
    <property type="entry name" value="UPF0235 PROTEIN C15ORF40"/>
    <property type="match status" value="1"/>
</dbReference>
<dbReference type="PANTHER" id="PTHR13420:SF7">
    <property type="entry name" value="UPF0235 PROTEIN C15ORF40"/>
    <property type="match status" value="1"/>
</dbReference>
<dbReference type="Pfam" id="PF02594">
    <property type="entry name" value="DUF167"/>
    <property type="match status" value="1"/>
</dbReference>
<dbReference type="SMART" id="SM01152">
    <property type="entry name" value="DUF167"/>
    <property type="match status" value="1"/>
</dbReference>
<dbReference type="SUPFAM" id="SSF69786">
    <property type="entry name" value="YggU-like"/>
    <property type="match status" value="1"/>
</dbReference>
<protein>
    <recommendedName>
        <fullName evidence="1">UPF0235 protein MMP1055</fullName>
    </recommendedName>
</protein>
<sequence length="101" mass="11507">MIEKMVKESEKGILIDIEVTTNAKKNEIGKINEWRKRIEIRIKEQPIEGKANKAIIKFLKGIFKSEILINSGTTSSQKTVLIPDKTKDDVVTILKKEIKSI</sequence>
<proteinExistence type="inferred from homology"/>